<gene>
    <name evidence="1" type="primary">xylB</name>
    <name type="ordered locus">SCO1170</name>
    <name type="ORF">2SCG11.04c</name>
    <name type="ORF">SCG11A.01</name>
</gene>
<dbReference type="EC" id="2.7.1.17" evidence="1"/>
<dbReference type="EMBL" id="AL939108">
    <property type="protein sequence ID" value="CAD55165.1"/>
    <property type="molecule type" value="Genomic_DNA"/>
</dbReference>
<dbReference type="RefSeq" id="NP_733525.1">
    <property type="nucleotide sequence ID" value="NC_003888.3"/>
</dbReference>
<dbReference type="RefSeq" id="WP_011027626.1">
    <property type="nucleotide sequence ID" value="NZ_VNID01000006.1"/>
</dbReference>
<dbReference type="SMR" id="Q9RK00"/>
<dbReference type="FunCoup" id="Q9RK00">
    <property type="interactions" value="6"/>
</dbReference>
<dbReference type="STRING" id="100226.gene:17758753"/>
<dbReference type="PaxDb" id="100226-SCO1170"/>
<dbReference type="KEGG" id="sco:SCO1170"/>
<dbReference type="PATRIC" id="fig|100226.15.peg.1168"/>
<dbReference type="eggNOG" id="COG1070">
    <property type="taxonomic scope" value="Bacteria"/>
</dbReference>
<dbReference type="HOGENOM" id="CLU_009281_12_0_11"/>
<dbReference type="InParanoid" id="Q9RK00"/>
<dbReference type="OrthoDB" id="9805576at2"/>
<dbReference type="PhylomeDB" id="Q9RK00"/>
<dbReference type="Proteomes" id="UP000001973">
    <property type="component" value="Chromosome"/>
</dbReference>
<dbReference type="GO" id="GO:0005524">
    <property type="term" value="F:ATP binding"/>
    <property type="evidence" value="ECO:0007669"/>
    <property type="project" value="UniProtKB-UniRule"/>
</dbReference>
<dbReference type="GO" id="GO:0004856">
    <property type="term" value="F:D-xylulokinase activity"/>
    <property type="evidence" value="ECO:0007669"/>
    <property type="project" value="UniProtKB-UniRule"/>
</dbReference>
<dbReference type="GO" id="GO:0042732">
    <property type="term" value="P:D-xylose metabolic process"/>
    <property type="evidence" value="ECO:0007669"/>
    <property type="project" value="UniProtKB-KW"/>
</dbReference>
<dbReference type="GO" id="GO:0005998">
    <property type="term" value="P:xylulose catabolic process"/>
    <property type="evidence" value="ECO:0007669"/>
    <property type="project" value="UniProtKB-UniRule"/>
</dbReference>
<dbReference type="CDD" id="cd07809">
    <property type="entry name" value="ASKHA_NBD_FGGY_BaXK-like"/>
    <property type="match status" value="1"/>
</dbReference>
<dbReference type="Gene3D" id="3.30.420.40">
    <property type="match status" value="2"/>
</dbReference>
<dbReference type="HAMAP" id="MF_02220">
    <property type="entry name" value="XylB"/>
    <property type="match status" value="1"/>
</dbReference>
<dbReference type="InterPro" id="IPR043129">
    <property type="entry name" value="ATPase_NBD"/>
</dbReference>
<dbReference type="InterPro" id="IPR000577">
    <property type="entry name" value="Carb_kinase_FGGY"/>
</dbReference>
<dbReference type="InterPro" id="IPR018483">
    <property type="entry name" value="Carb_kinase_FGGY_CS"/>
</dbReference>
<dbReference type="InterPro" id="IPR018485">
    <property type="entry name" value="FGGY_C"/>
</dbReference>
<dbReference type="InterPro" id="IPR050406">
    <property type="entry name" value="FGGY_Carb_Kinase"/>
</dbReference>
<dbReference type="InterPro" id="IPR018484">
    <property type="entry name" value="FGGY_N"/>
</dbReference>
<dbReference type="InterPro" id="IPR006000">
    <property type="entry name" value="Xylulokinase"/>
</dbReference>
<dbReference type="NCBIfam" id="TIGR01312">
    <property type="entry name" value="XylB"/>
    <property type="match status" value="1"/>
</dbReference>
<dbReference type="PANTHER" id="PTHR43095">
    <property type="entry name" value="SUGAR KINASE"/>
    <property type="match status" value="1"/>
</dbReference>
<dbReference type="PANTHER" id="PTHR43095:SF5">
    <property type="entry name" value="XYLULOSE KINASE"/>
    <property type="match status" value="1"/>
</dbReference>
<dbReference type="Pfam" id="PF02782">
    <property type="entry name" value="FGGY_C"/>
    <property type="match status" value="1"/>
</dbReference>
<dbReference type="Pfam" id="PF00370">
    <property type="entry name" value="FGGY_N"/>
    <property type="match status" value="1"/>
</dbReference>
<dbReference type="PIRSF" id="PIRSF000538">
    <property type="entry name" value="GlpK"/>
    <property type="match status" value="1"/>
</dbReference>
<dbReference type="SUPFAM" id="SSF53067">
    <property type="entry name" value="Actin-like ATPase domain"/>
    <property type="match status" value="2"/>
</dbReference>
<dbReference type="PROSITE" id="PS00933">
    <property type="entry name" value="FGGY_KINASES_1"/>
    <property type="match status" value="1"/>
</dbReference>
<dbReference type="PROSITE" id="PS00445">
    <property type="entry name" value="FGGY_KINASES_2"/>
    <property type="match status" value="1"/>
</dbReference>
<evidence type="ECO:0000255" key="1">
    <source>
        <dbReference type="HAMAP-Rule" id="MF_02220"/>
    </source>
</evidence>
<evidence type="ECO:0000305" key="2"/>
<keyword id="KW-0067">ATP-binding</keyword>
<keyword id="KW-0119">Carbohydrate metabolism</keyword>
<keyword id="KW-0418">Kinase</keyword>
<keyword id="KW-0547">Nucleotide-binding</keyword>
<keyword id="KW-1185">Reference proteome</keyword>
<keyword id="KW-0808">Transferase</keyword>
<keyword id="KW-0859">Xylose metabolism</keyword>
<name>XYLB_STRCO</name>
<reference key="1">
    <citation type="journal article" date="2002" name="Nature">
        <title>Complete genome sequence of the model actinomycete Streptomyces coelicolor A3(2).</title>
        <authorList>
            <person name="Bentley S.D."/>
            <person name="Chater K.F."/>
            <person name="Cerdeno-Tarraga A.-M."/>
            <person name="Challis G.L."/>
            <person name="Thomson N.R."/>
            <person name="James K.D."/>
            <person name="Harris D.E."/>
            <person name="Quail M.A."/>
            <person name="Kieser H."/>
            <person name="Harper D."/>
            <person name="Bateman A."/>
            <person name="Brown S."/>
            <person name="Chandra G."/>
            <person name="Chen C.W."/>
            <person name="Collins M."/>
            <person name="Cronin A."/>
            <person name="Fraser A."/>
            <person name="Goble A."/>
            <person name="Hidalgo J."/>
            <person name="Hornsby T."/>
            <person name="Howarth S."/>
            <person name="Huang C.-H."/>
            <person name="Kieser T."/>
            <person name="Larke L."/>
            <person name="Murphy L.D."/>
            <person name="Oliver K."/>
            <person name="O'Neil S."/>
            <person name="Rabbinowitsch E."/>
            <person name="Rajandream M.A."/>
            <person name="Rutherford K.M."/>
            <person name="Rutter S."/>
            <person name="Seeger K."/>
            <person name="Saunders D."/>
            <person name="Sharp S."/>
            <person name="Squares R."/>
            <person name="Squares S."/>
            <person name="Taylor K."/>
            <person name="Warren T."/>
            <person name="Wietzorrek A."/>
            <person name="Woodward J.R."/>
            <person name="Barrell B.G."/>
            <person name="Parkhill J."/>
            <person name="Hopwood D.A."/>
        </authorList>
    </citation>
    <scope>NUCLEOTIDE SEQUENCE [LARGE SCALE GENOMIC DNA]</scope>
    <source>
        <strain>ATCC BAA-471 / A3(2) / M145</strain>
    </source>
</reference>
<proteinExistence type="inferred from homology"/>
<sequence length="481" mass="49682">MSAAEGPLVVGVDTSTQSTKALVVDAATGRVVASGQAPHTVSSGTGRESDPRQWWDALGEALSQCGEAAREAAAVSVGGQQHGLVTLDARGEPVRPALLWNDVRSAPQARRLIDELGGAKAWAERTGSVPSASFTVTKWAWLTEHEPEAARAVKAVRLPHDYLTERLTGEGTTDRGDVSGTGWWASGTEAYDEEILARVALDPALLPRVVRPGEVAGTVRDGHGLPFSKGTLVAAGTGDNAAAALGLGLRPGVPVMSLGTSGTAYAVSQRRPADPTGTVAGFADARGDWLPLACTLNCTLAVDRVASLLGLDREAVEPGTDVTLLPFLDGERTPNLPHSSGLLHGLRHDTTAGQLLQAAYDGAVHSLLGALDLVLDADADPSAPLLLIGGGARGTAWQQTVRRLSGRPVQIPEARELVALGAAAQAAGLLTGEDAAAVARRWNTAAGPVLDAVERDEATLNRITGVLSDAAPLLERDAASR</sequence>
<protein>
    <recommendedName>
        <fullName evidence="1">Xylulose kinase</fullName>
        <shortName evidence="1">Xylulokinase</shortName>
        <ecNumber evidence="1">2.7.1.17</ecNumber>
    </recommendedName>
</protein>
<feature type="chain" id="PRO_0000059558" description="Xylulose kinase">
    <location>
        <begin position="1"/>
        <end position="481"/>
    </location>
</feature>
<feature type="active site" description="Proton acceptor" evidence="1">
    <location>
        <position position="239"/>
    </location>
</feature>
<feature type="binding site" evidence="1">
    <location>
        <begin position="81"/>
        <end position="82"/>
    </location>
    <ligand>
        <name>substrate</name>
    </ligand>
</feature>
<feature type="site" description="Important for activity" evidence="1">
    <location>
        <position position="13"/>
    </location>
</feature>
<organism>
    <name type="scientific">Streptomyces coelicolor (strain ATCC BAA-471 / A3(2) / M145)</name>
    <dbReference type="NCBI Taxonomy" id="100226"/>
    <lineage>
        <taxon>Bacteria</taxon>
        <taxon>Bacillati</taxon>
        <taxon>Actinomycetota</taxon>
        <taxon>Actinomycetes</taxon>
        <taxon>Kitasatosporales</taxon>
        <taxon>Streptomycetaceae</taxon>
        <taxon>Streptomyces</taxon>
        <taxon>Streptomyces albidoflavus group</taxon>
    </lineage>
</organism>
<comment type="function">
    <text evidence="1">Catalyzes the phosphorylation of D-xylulose to D-xylulose 5-phosphate.</text>
</comment>
<comment type="catalytic activity">
    <reaction evidence="1">
        <text>D-xylulose + ATP = D-xylulose 5-phosphate + ADP + H(+)</text>
        <dbReference type="Rhea" id="RHEA:10964"/>
        <dbReference type="ChEBI" id="CHEBI:15378"/>
        <dbReference type="ChEBI" id="CHEBI:17140"/>
        <dbReference type="ChEBI" id="CHEBI:30616"/>
        <dbReference type="ChEBI" id="CHEBI:57737"/>
        <dbReference type="ChEBI" id="CHEBI:456216"/>
        <dbReference type="EC" id="2.7.1.17"/>
    </reaction>
</comment>
<comment type="similarity">
    <text evidence="1 2">Belongs to the FGGY kinase family.</text>
</comment>
<accession>Q9RK00</accession>
<accession>Q9L0B7</accession>